<reference key="1">
    <citation type="journal article" date="2005" name="Nature">
        <title>Genomic sequence of the pathogenic and allergenic filamentous fungus Aspergillus fumigatus.</title>
        <authorList>
            <person name="Nierman W.C."/>
            <person name="Pain A."/>
            <person name="Anderson M.J."/>
            <person name="Wortman J.R."/>
            <person name="Kim H.S."/>
            <person name="Arroyo J."/>
            <person name="Berriman M."/>
            <person name="Abe K."/>
            <person name="Archer D.B."/>
            <person name="Bermejo C."/>
            <person name="Bennett J.W."/>
            <person name="Bowyer P."/>
            <person name="Chen D."/>
            <person name="Collins M."/>
            <person name="Coulsen R."/>
            <person name="Davies R."/>
            <person name="Dyer P.S."/>
            <person name="Farman M.L."/>
            <person name="Fedorova N."/>
            <person name="Fedorova N.D."/>
            <person name="Feldblyum T.V."/>
            <person name="Fischer R."/>
            <person name="Fosker N."/>
            <person name="Fraser A."/>
            <person name="Garcia J.L."/>
            <person name="Garcia M.J."/>
            <person name="Goble A."/>
            <person name="Goldman G.H."/>
            <person name="Gomi K."/>
            <person name="Griffith-Jones S."/>
            <person name="Gwilliam R."/>
            <person name="Haas B.J."/>
            <person name="Haas H."/>
            <person name="Harris D.E."/>
            <person name="Horiuchi H."/>
            <person name="Huang J."/>
            <person name="Humphray S."/>
            <person name="Jimenez J."/>
            <person name="Keller N."/>
            <person name="Khouri H."/>
            <person name="Kitamoto K."/>
            <person name="Kobayashi T."/>
            <person name="Konzack S."/>
            <person name="Kulkarni R."/>
            <person name="Kumagai T."/>
            <person name="Lafton A."/>
            <person name="Latge J.-P."/>
            <person name="Li W."/>
            <person name="Lord A."/>
            <person name="Lu C."/>
            <person name="Majoros W.H."/>
            <person name="May G.S."/>
            <person name="Miller B.L."/>
            <person name="Mohamoud Y."/>
            <person name="Molina M."/>
            <person name="Monod M."/>
            <person name="Mouyna I."/>
            <person name="Mulligan S."/>
            <person name="Murphy L.D."/>
            <person name="O'Neil S."/>
            <person name="Paulsen I."/>
            <person name="Penalva M.A."/>
            <person name="Pertea M."/>
            <person name="Price C."/>
            <person name="Pritchard B.L."/>
            <person name="Quail M.A."/>
            <person name="Rabbinowitsch E."/>
            <person name="Rawlins N."/>
            <person name="Rajandream M.A."/>
            <person name="Reichard U."/>
            <person name="Renauld H."/>
            <person name="Robson G.D."/>
            <person name="Rodriguez de Cordoba S."/>
            <person name="Rodriguez-Pena J.M."/>
            <person name="Ronning C.M."/>
            <person name="Rutter S."/>
            <person name="Salzberg S.L."/>
            <person name="Sanchez M."/>
            <person name="Sanchez-Ferrero J.C."/>
            <person name="Saunders D."/>
            <person name="Seeger K."/>
            <person name="Squares R."/>
            <person name="Squares S."/>
            <person name="Takeuchi M."/>
            <person name="Tekaia F."/>
            <person name="Turner G."/>
            <person name="Vazquez de Aldana C.R."/>
            <person name="Weidman J."/>
            <person name="White O."/>
            <person name="Woodward J.R."/>
            <person name="Yu J.-H."/>
            <person name="Fraser C.M."/>
            <person name="Galagan J.E."/>
            <person name="Asai K."/>
            <person name="Machida M."/>
            <person name="Hall N."/>
            <person name="Barrell B.G."/>
            <person name="Denning D.W."/>
        </authorList>
    </citation>
    <scope>NUCLEOTIDE SEQUENCE [LARGE SCALE GENOMIC DNA]</scope>
    <source>
        <strain>ATCC MYA-4609 / CBS 101355 / FGSC A1100 / Af293</strain>
    </source>
</reference>
<accession>Q4X0Z3</accession>
<dbReference type="EMBL" id="AAHF01000001">
    <property type="protein sequence ID" value="EAL93472.1"/>
    <property type="molecule type" value="Genomic_DNA"/>
</dbReference>
<dbReference type="RefSeq" id="XP_755510.1">
    <property type="nucleotide sequence ID" value="XM_750417.1"/>
</dbReference>
<dbReference type="SMR" id="Q4X0Z3"/>
<dbReference type="STRING" id="330879.Q4X0Z3"/>
<dbReference type="EnsemblFungi" id="EAL93472">
    <property type="protein sequence ID" value="EAL93472"/>
    <property type="gene ID" value="AFUA_2G11780"/>
</dbReference>
<dbReference type="GeneID" id="3513174"/>
<dbReference type="KEGG" id="afm:AFUA_2G11780"/>
<dbReference type="VEuPathDB" id="FungiDB:Afu2g11780"/>
<dbReference type="eggNOG" id="KOG1721">
    <property type="taxonomic scope" value="Eukaryota"/>
</dbReference>
<dbReference type="HOGENOM" id="CLU_036230_0_0_1"/>
<dbReference type="InParanoid" id="Q4X0Z3"/>
<dbReference type="OMA" id="YHMARSH"/>
<dbReference type="OrthoDB" id="654211at2759"/>
<dbReference type="Proteomes" id="UP000002530">
    <property type="component" value="Chromosome 2"/>
</dbReference>
<dbReference type="GO" id="GO:0005737">
    <property type="term" value="C:cytoplasm"/>
    <property type="evidence" value="ECO:0000318"/>
    <property type="project" value="GO_Central"/>
</dbReference>
<dbReference type="GO" id="GO:0005634">
    <property type="term" value="C:nucleus"/>
    <property type="evidence" value="ECO:0000318"/>
    <property type="project" value="GO_Central"/>
</dbReference>
<dbReference type="GO" id="GO:0000978">
    <property type="term" value="F:RNA polymerase II cis-regulatory region sequence-specific DNA binding"/>
    <property type="evidence" value="ECO:0000318"/>
    <property type="project" value="GO_Central"/>
</dbReference>
<dbReference type="GO" id="GO:0008270">
    <property type="term" value="F:zinc ion binding"/>
    <property type="evidence" value="ECO:0007669"/>
    <property type="project" value="UniProtKB-KW"/>
</dbReference>
<dbReference type="GO" id="GO:0006355">
    <property type="term" value="P:regulation of DNA-templated transcription"/>
    <property type="evidence" value="ECO:0007669"/>
    <property type="project" value="UniProtKB-ARBA"/>
</dbReference>
<dbReference type="FunFam" id="3.30.160.60:FF:000089">
    <property type="entry name" value="DNA-binding protein creA"/>
    <property type="match status" value="1"/>
</dbReference>
<dbReference type="FunFam" id="3.30.160.60:FF:000152">
    <property type="entry name" value="DNA-binding protein creA"/>
    <property type="match status" value="1"/>
</dbReference>
<dbReference type="Gene3D" id="3.30.160.60">
    <property type="entry name" value="Classic Zinc Finger"/>
    <property type="match status" value="2"/>
</dbReference>
<dbReference type="InterPro" id="IPR051007">
    <property type="entry name" value="creA/MIG_C2H2-ZnF"/>
</dbReference>
<dbReference type="InterPro" id="IPR036236">
    <property type="entry name" value="Znf_C2H2_sf"/>
</dbReference>
<dbReference type="InterPro" id="IPR013087">
    <property type="entry name" value="Znf_C2H2_type"/>
</dbReference>
<dbReference type="PANTHER" id="PTHR47428">
    <property type="entry name" value="REGULATORY PROTEIN MIG1-RELATED"/>
    <property type="match status" value="1"/>
</dbReference>
<dbReference type="PANTHER" id="PTHR47428:SF1">
    <property type="entry name" value="REGULATORY PROTEIN MIG1-RELATED"/>
    <property type="match status" value="1"/>
</dbReference>
<dbReference type="Pfam" id="PF00096">
    <property type="entry name" value="zf-C2H2"/>
    <property type="match status" value="2"/>
</dbReference>
<dbReference type="SMART" id="SM00355">
    <property type="entry name" value="ZnF_C2H2"/>
    <property type="match status" value="2"/>
</dbReference>
<dbReference type="SUPFAM" id="SSF57667">
    <property type="entry name" value="beta-beta-alpha zinc fingers"/>
    <property type="match status" value="1"/>
</dbReference>
<dbReference type="PROSITE" id="PS00028">
    <property type="entry name" value="ZINC_FINGER_C2H2_1"/>
    <property type="match status" value="2"/>
</dbReference>
<dbReference type="PROSITE" id="PS50157">
    <property type="entry name" value="ZINC_FINGER_C2H2_2"/>
    <property type="match status" value="2"/>
</dbReference>
<gene>
    <name type="primary">creA</name>
    <name type="ORF">AFUA_2G11780</name>
</gene>
<organism>
    <name type="scientific">Aspergillus fumigatus (strain ATCC MYA-4609 / CBS 101355 / FGSC A1100 / Af293)</name>
    <name type="common">Neosartorya fumigata</name>
    <dbReference type="NCBI Taxonomy" id="330879"/>
    <lineage>
        <taxon>Eukaryota</taxon>
        <taxon>Fungi</taxon>
        <taxon>Dikarya</taxon>
        <taxon>Ascomycota</taxon>
        <taxon>Pezizomycotina</taxon>
        <taxon>Eurotiomycetes</taxon>
        <taxon>Eurotiomycetidae</taxon>
        <taxon>Eurotiales</taxon>
        <taxon>Aspergillaceae</taxon>
        <taxon>Aspergillus</taxon>
        <taxon>Aspergillus subgen. Fumigati</taxon>
    </lineage>
</organism>
<name>CREA_ASPFU</name>
<sequence length="424" mass="45786">MPPPASSMGFSDLLNPQNPESTPSTPASKSSAPSTPSTEQSNSNMASSVSLLPPLMKGARPANEEPRQDLPRPYKCPLCDRAFHRLEHQTRHIRTHTGEKPHACQFPGCTKRFSRSDELTRHSRIHNNPNSRRNNKAQHLAAAAAAAAANQDNALASNAASMMPPPSKPITRSAPVSQVGSPDISPPHSFSNYAGHMRSNLGSYARNSDRASSGMDINLLATAASQVERDEHYGFHNGPRGHHIFGSRHHNNNRLPSLSAYAISQNMSRSHSHDEDDMYSHRVKRSRPNSPNSTAPSSPTFSHDSLSPTPDHTPLATPAHSPRLRPLGTSELQLPSIRHLSLHHTPALAPMEPQPEGPNYYSPTQPHVGPSISDIMSKPDGTQRKLPVPQVPKVAVQDLLSPGFTSVSSSASNSVAGGDLADRF</sequence>
<keyword id="KW-0238">DNA-binding</keyword>
<keyword id="KW-0479">Metal-binding</keyword>
<keyword id="KW-0539">Nucleus</keyword>
<keyword id="KW-1185">Reference proteome</keyword>
<keyword id="KW-0677">Repeat</keyword>
<keyword id="KW-0678">Repressor</keyword>
<keyword id="KW-0804">Transcription</keyword>
<keyword id="KW-0805">Transcription regulation</keyword>
<keyword id="KW-0832">Ubl conjugation</keyword>
<keyword id="KW-0862">Zinc</keyword>
<keyword id="KW-0863">Zinc-finger</keyword>
<protein>
    <recommendedName>
        <fullName>Probable DNA-binding protein creA</fullName>
    </recommendedName>
    <alternativeName>
        <fullName>Carbon catabolite repressor A</fullName>
    </alternativeName>
</protein>
<evidence type="ECO:0000250" key="1"/>
<evidence type="ECO:0000255" key="2">
    <source>
        <dbReference type="PROSITE-ProRule" id="PRU00042"/>
    </source>
</evidence>
<evidence type="ECO:0000256" key="3">
    <source>
        <dbReference type="SAM" id="MobiDB-lite"/>
    </source>
</evidence>
<evidence type="ECO:0000305" key="4"/>
<proteinExistence type="inferred from homology"/>
<feature type="chain" id="PRO_0000395722" description="Probable DNA-binding protein creA">
    <location>
        <begin position="1"/>
        <end position="424"/>
    </location>
</feature>
<feature type="zinc finger region" description="C2H2-type 1" evidence="2">
    <location>
        <begin position="74"/>
        <end position="96"/>
    </location>
</feature>
<feature type="zinc finger region" description="C2H2-type 2" evidence="2">
    <location>
        <begin position="102"/>
        <end position="126"/>
    </location>
</feature>
<feature type="region of interest" description="Disordered" evidence="3">
    <location>
        <begin position="1"/>
        <end position="74"/>
    </location>
</feature>
<feature type="region of interest" description="Disordered" evidence="3">
    <location>
        <begin position="115"/>
        <end position="134"/>
    </location>
</feature>
<feature type="region of interest" description="Disordered" evidence="3">
    <location>
        <begin position="161"/>
        <end position="184"/>
    </location>
</feature>
<feature type="region of interest" description="Disordered" evidence="3">
    <location>
        <begin position="266"/>
        <end position="327"/>
    </location>
</feature>
<feature type="region of interest" description="Disordered" evidence="3">
    <location>
        <begin position="347"/>
        <end position="386"/>
    </location>
</feature>
<feature type="region of interest" description="Disordered" evidence="3">
    <location>
        <begin position="403"/>
        <end position="424"/>
    </location>
</feature>
<feature type="compositionally biased region" description="Low complexity" evidence="3">
    <location>
        <begin position="21"/>
        <end position="38"/>
    </location>
</feature>
<feature type="compositionally biased region" description="Polar residues" evidence="3">
    <location>
        <begin position="39"/>
        <end position="50"/>
    </location>
</feature>
<feature type="compositionally biased region" description="Basic and acidic residues" evidence="3">
    <location>
        <begin position="62"/>
        <end position="72"/>
    </location>
</feature>
<feature type="compositionally biased region" description="Basic and acidic residues" evidence="3">
    <location>
        <begin position="271"/>
        <end position="280"/>
    </location>
</feature>
<feature type="compositionally biased region" description="Low complexity" evidence="3">
    <location>
        <begin position="288"/>
        <end position="302"/>
    </location>
</feature>
<feature type="compositionally biased region" description="Low complexity" evidence="3">
    <location>
        <begin position="406"/>
        <end position="416"/>
    </location>
</feature>
<comment type="function">
    <text evidence="1">Transcription regulator component of the regulatory network controlling carbon source utilization through ubiquitination and deubiquitination involving creA, creB, creC, creD and acrB. Represses the transcription of the alcR, alcA and aldA genes by binding to a GC-rich region in their promoter. Also plays a role in response to carbon starvation and the control of extracellular proteases activity (By similarity).</text>
</comment>
<comment type="subunit">
    <text evidence="1">Interacts with creB.</text>
</comment>
<comment type="subcellular location">
    <subcellularLocation>
        <location evidence="1">Nucleus</location>
    </subcellularLocation>
</comment>
<comment type="PTM">
    <text evidence="1">Ubiquitinated. Deubiquitinated by creB, probably to control its activity or amount (By similarity).</text>
</comment>
<comment type="similarity">
    <text evidence="4">Belongs to the creA/MIG C2H2-type zinc-finger protein family.</text>
</comment>